<feature type="initiator methionine" description="Removed" evidence="3">
    <location>
        <position position="1"/>
    </location>
</feature>
<feature type="chain" id="PRO_0000389405" description="Small ribosomal subunit protein eS1B">
    <location>
        <begin position="2"/>
        <end position="255"/>
    </location>
</feature>
<feature type="modified residue" description="N-acetylalanine; partial" evidence="2 3">
    <location>
        <position position="2"/>
    </location>
</feature>
<feature type="modified residue" description="Phosphoserine" evidence="1">
    <location>
        <position position="245"/>
    </location>
</feature>
<feature type="modified residue" description="Phosphothreonine" evidence="1">
    <location>
        <position position="254"/>
    </location>
</feature>
<feature type="cross-link" description="Glycyl lysine isopeptide (Lys-Gly) (interchain with G-Cter in ubiquitin)" evidence="1">
    <location>
        <position position="248"/>
    </location>
</feature>
<gene>
    <name evidence="3" type="primary">RPS1B</name>
    <name type="ORF">AWRI1631_130750</name>
</gene>
<name>RS3A2_YEAS6</name>
<protein>
    <recommendedName>
        <fullName evidence="3">Small ribosomal subunit protein eS1B</fullName>
    </recommendedName>
    <alternativeName>
        <fullName evidence="4">40S ribosomal protein S1-B</fullName>
    </alternativeName>
</protein>
<comment type="subunit">
    <text evidence="3">Component of the small ribosomal subunit. Mature ribosomes consist of a small (40S) and a large (60S) subunit. The 40S subunit contains about 33 different proteins and 1 molecule of RNA (18S). The 60S subunit contains about 49 different proteins and 3 molecules of RNA (25S, 5.8S and 5S).</text>
</comment>
<comment type="subcellular location">
    <subcellularLocation>
        <location evidence="3">Cytoplasm</location>
    </subcellularLocation>
</comment>
<comment type="similarity">
    <text evidence="3">Belongs to the eukaryotic ribosomal protein eS1 family.</text>
</comment>
<accession>B5VP69</accession>
<reference key="1">
    <citation type="journal article" date="2008" name="FEMS Yeast Res.">
        <title>Comparative genome analysis of a Saccharomyces cerevisiae wine strain.</title>
        <authorList>
            <person name="Borneman A.R."/>
            <person name="Forgan A.H."/>
            <person name="Pretorius I.S."/>
            <person name="Chambers P.J."/>
        </authorList>
    </citation>
    <scope>NUCLEOTIDE SEQUENCE [LARGE SCALE GENOMIC DNA]</scope>
    <source>
        <strain>AWRI1631</strain>
    </source>
</reference>
<organism>
    <name type="scientific">Saccharomyces cerevisiae (strain AWRI1631)</name>
    <name type="common">Baker's yeast</name>
    <dbReference type="NCBI Taxonomy" id="545124"/>
    <lineage>
        <taxon>Eukaryota</taxon>
        <taxon>Fungi</taxon>
        <taxon>Dikarya</taxon>
        <taxon>Ascomycota</taxon>
        <taxon>Saccharomycotina</taxon>
        <taxon>Saccharomycetes</taxon>
        <taxon>Saccharomycetales</taxon>
        <taxon>Saccharomycetaceae</taxon>
        <taxon>Saccharomyces</taxon>
    </lineage>
</organism>
<keyword id="KW-0007">Acetylation</keyword>
<keyword id="KW-0963">Cytoplasm</keyword>
<keyword id="KW-1017">Isopeptide bond</keyword>
<keyword id="KW-0597">Phosphoprotein</keyword>
<keyword id="KW-0687">Ribonucleoprotein</keyword>
<keyword id="KW-0689">Ribosomal protein</keyword>
<keyword id="KW-0832">Ubl conjugation</keyword>
<dbReference type="EMBL" id="ABSV01001765">
    <property type="protein sequence ID" value="EDZ70281.1"/>
    <property type="molecule type" value="Genomic_DNA"/>
</dbReference>
<dbReference type="SMR" id="B5VP69"/>
<dbReference type="Proteomes" id="UP000008988">
    <property type="component" value="Unassembled WGS sequence"/>
</dbReference>
<dbReference type="GO" id="GO:0022627">
    <property type="term" value="C:cytosolic small ribosomal subunit"/>
    <property type="evidence" value="ECO:0007669"/>
    <property type="project" value="UniProtKB-UniRule"/>
</dbReference>
<dbReference type="GO" id="GO:0003735">
    <property type="term" value="F:structural constituent of ribosome"/>
    <property type="evidence" value="ECO:0007669"/>
    <property type="project" value="UniProtKB-UniRule"/>
</dbReference>
<dbReference type="GO" id="GO:0006412">
    <property type="term" value="P:translation"/>
    <property type="evidence" value="ECO:0007669"/>
    <property type="project" value="UniProtKB-UniRule"/>
</dbReference>
<dbReference type="HAMAP" id="MF_03122">
    <property type="entry name" value="Ribosomal_eS1_euk"/>
    <property type="match status" value="1"/>
</dbReference>
<dbReference type="InterPro" id="IPR001593">
    <property type="entry name" value="Ribosomal_eS1"/>
</dbReference>
<dbReference type="InterPro" id="IPR018281">
    <property type="entry name" value="Ribosomal_eS1_CS"/>
</dbReference>
<dbReference type="InterPro" id="IPR027500">
    <property type="entry name" value="Ribosomal_eS1_euk"/>
</dbReference>
<dbReference type="PANTHER" id="PTHR11830">
    <property type="entry name" value="40S RIBOSOMAL PROTEIN S3A"/>
    <property type="match status" value="1"/>
</dbReference>
<dbReference type="Pfam" id="PF01015">
    <property type="entry name" value="Ribosomal_S3Ae"/>
    <property type="match status" value="1"/>
</dbReference>
<dbReference type="SMART" id="SM01397">
    <property type="entry name" value="Ribosomal_S3Ae"/>
    <property type="match status" value="1"/>
</dbReference>
<dbReference type="PROSITE" id="PS01191">
    <property type="entry name" value="RIBOSOMAL_S3AE"/>
    <property type="match status" value="1"/>
</dbReference>
<sequence length="255" mass="28812">MAVGKNKRLSRGKKGLKKKVVDPFTRKEWFDIKAPSTFENRNVGKTLVNKSTGLKNASDALKGRVVEVCLADLQGSEDHSFRKVKLRVDEVQGKNLLTNFHGMDFTTDKLRSMVRKWQTLIEANVTVKTSDDYVLRIFAIAFTRKQANQVKRHSYAQSSHIRAIRKVISEILTREVQNSTLAQLTSKLIPEVINKEIENATKDIFPLQNIHVRKVKLLKQPKFDVGALMALHGEGSGEEKGKKVSGFKDEVLETV</sequence>
<evidence type="ECO:0000250" key="1">
    <source>
        <dbReference type="UniProtKB" id="P23248"/>
    </source>
</evidence>
<evidence type="ECO:0000250" key="2">
    <source>
        <dbReference type="UniProtKB" id="P33442"/>
    </source>
</evidence>
<evidence type="ECO:0000255" key="3">
    <source>
        <dbReference type="HAMAP-Rule" id="MF_03122"/>
    </source>
</evidence>
<evidence type="ECO:0000305" key="4"/>
<proteinExistence type="inferred from homology"/>